<name>TRMD_CAMJR</name>
<proteinExistence type="inferred from homology"/>
<dbReference type="EC" id="2.1.1.228" evidence="1"/>
<dbReference type="EMBL" id="CP000025">
    <property type="protein sequence ID" value="AAW34598.1"/>
    <property type="molecule type" value="Genomic_DNA"/>
</dbReference>
<dbReference type="RefSeq" id="WP_002885710.1">
    <property type="nucleotide sequence ID" value="NC_003912.7"/>
</dbReference>
<dbReference type="SMR" id="Q5HV68"/>
<dbReference type="KEGG" id="cjr:CJE0813"/>
<dbReference type="HOGENOM" id="CLU_047363_0_1_7"/>
<dbReference type="GO" id="GO:0005829">
    <property type="term" value="C:cytosol"/>
    <property type="evidence" value="ECO:0007669"/>
    <property type="project" value="TreeGrafter"/>
</dbReference>
<dbReference type="GO" id="GO:0052906">
    <property type="term" value="F:tRNA (guanine(37)-N1)-methyltransferase activity"/>
    <property type="evidence" value="ECO:0007669"/>
    <property type="project" value="UniProtKB-UniRule"/>
</dbReference>
<dbReference type="GO" id="GO:0002939">
    <property type="term" value="P:tRNA N1-guanine methylation"/>
    <property type="evidence" value="ECO:0007669"/>
    <property type="project" value="TreeGrafter"/>
</dbReference>
<dbReference type="CDD" id="cd18080">
    <property type="entry name" value="TrmD-like"/>
    <property type="match status" value="1"/>
</dbReference>
<dbReference type="Gene3D" id="3.40.1280.10">
    <property type="match status" value="1"/>
</dbReference>
<dbReference type="Gene3D" id="1.10.1270.20">
    <property type="entry name" value="tRNA(m1g37)methyltransferase, domain 2"/>
    <property type="match status" value="1"/>
</dbReference>
<dbReference type="HAMAP" id="MF_00605">
    <property type="entry name" value="TrmD"/>
    <property type="match status" value="1"/>
</dbReference>
<dbReference type="InterPro" id="IPR029028">
    <property type="entry name" value="Alpha/beta_knot_MTases"/>
</dbReference>
<dbReference type="InterPro" id="IPR023148">
    <property type="entry name" value="tRNA_m1G_MeTrfase_C_sf"/>
</dbReference>
<dbReference type="InterPro" id="IPR002649">
    <property type="entry name" value="tRNA_m1G_MeTrfase_TrmD"/>
</dbReference>
<dbReference type="InterPro" id="IPR029026">
    <property type="entry name" value="tRNA_m1G_MTases_N"/>
</dbReference>
<dbReference type="InterPro" id="IPR016009">
    <property type="entry name" value="tRNA_MeTrfase_TRMD/TRM10"/>
</dbReference>
<dbReference type="NCBIfam" id="NF000648">
    <property type="entry name" value="PRK00026.1"/>
    <property type="match status" value="1"/>
</dbReference>
<dbReference type="NCBIfam" id="TIGR00088">
    <property type="entry name" value="trmD"/>
    <property type="match status" value="1"/>
</dbReference>
<dbReference type="PANTHER" id="PTHR46417">
    <property type="entry name" value="TRNA (GUANINE-N(1)-)-METHYLTRANSFERASE"/>
    <property type="match status" value="1"/>
</dbReference>
<dbReference type="PANTHER" id="PTHR46417:SF1">
    <property type="entry name" value="TRNA (GUANINE-N(1)-)-METHYLTRANSFERASE"/>
    <property type="match status" value="1"/>
</dbReference>
<dbReference type="Pfam" id="PF01746">
    <property type="entry name" value="tRNA_m1G_MT"/>
    <property type="match status" value="1"/>
</dbReference>
<dbReference type="PIRSF" id="PIRSF000386">
    <property type="entry name" value="tRNA_mtase"/>
    <property type="match status" value="1"/>
</dbReference>
<dbReference type="SUPFAM" id="SSF75217">
    <property type="entry name" value="alpha/beta knot"/>
    <property type="match status" value="1"/>
</dbReference>
<protein>
    <recommendedName>
        <fullName evidence="1">tRNA (guanine-N(1)-)-methyltransferase</fullName>
        <ecNumber evidence="1">2.1.1.228</ecNumber>
    </recommendedName>
    <alternativeName>
        <fullName evidence="1">M1G-methyltransferase</fullName>
    </alternativeName>
    <alternativeName>
        <fullName evidence="1">tRNA [GM37] methyltransferase</fullName>
    </alternativeName>
</protein>
<keyword id="KW-0963">Cytoplasm</keyword>
<keyword id="KW-0489">Methyltransferase</keyword>
<keyword id="KW-0949">S-adenosyl-L-methionine</keyword>
<keyword id="KW-0808">Transferase</keyword>
<keyword id="KW-0819">tRNA processing</keyword>
<sequence>MKFSFVSLFPNLMEFYFQDSILARAKEKKLFKLNFYNPRDFSKNSYHKVDDYKIGGGAGLLMQAEPMYEVLRSIQEKKENPYFIFLNPSGKTFNQKDAKRLSKKEHIVFVCGRYEGIDERVLEIFANEIFSIGDFILTGGELPALVMCDAILRNVNGVLGNMESLKEESFENNLLEAPAFSKPFIFEKKNKKFYTPSEFLKGNHARIASLKTTLASCKTKFFRPDLFLEHERKK</sequence>
<accession>Q5HV68</accession>
<evidence type="ECO:0000255" key="1">
    <source>
        <dbReference type="HAMAP-Rule" id="MF_00605"/>
    </source>
</evidence>
<comment type="function">
    <text evidence="1">Specifically methylates guanosine-37 in various tRNAs.</text>
</comment>
<comment type="catalytic activity">
    <reaction evidence="1">
        <text>guanosine(37) in tRNA + S-adenosyl-L-methionine = N(1)-methylguanosine(37) in tRNA + S-adenosyl-L-homocysteine + H(+)</text>
        <dbReference type="Rhea" id="RHEA:36899"/>
        <dbReference type="Rhea" id="RHEA-COMP:10145"/>
        <dbReference type="Rhea" id="RHEA-COMP:10147"/>
        <dbReference type="ChEBI" id="CHEBI:15378"/>
        <dbReference type="ChEBI" id="CHEBI:57856"/>
        <dbReference type="ChEBI" id="CHEBI:59789"/>
        <dbReference type="ChEBI" id="CHEBI:73542"/>
        <dbReference type="ChEBI" id="CHEBI:74269"/>
        <dbReference type="EC" id="2.1.1.228"/>
    </reaction>
</comment>
<comment type="subunit">
    <text evidence="1">Homodimer.</text>
</comment>
<comment type="subcellular location">
    <subcellularLocation>
        <location evidence="1">Cytoplasm</location>
    </subcellularLocation>
</comment>
<comment type="similarity">
    <text evidence="1">Belongs to the RNA methyltransferase TrmD family.</text>
</comment>
<feature type="chain" id="PRO_0000060351" description="tRNA (guanine-N(1)-)-methyltransferase">
    <location>
        <begin position="1"/>
        <end position="234"/>
    </location>
</feature>
<feature type="binding site" evidence="1">
    <location>
        <position position="112"/>
    </location>
    <ligand>
        <name>S-adenosyl-L-methionine</name>
        <dbReference type="ChEBI" id="CHEBI:59789"/>
    </ligand>
</feature>
<feature type="binding site" evidence="1">
    <location>
        <begin position="132"/>
        <end position="137"/>
    </location>
    <ligand>
        <name>S-adenosyl-L-methionine</name>
        <dbReference type="ChEBI" id="CHEBI:59789"/>
    </ligand>
</feature>
<gene>
    <name evidence="1" type="primary">trmD</name>
    <name type="ordered locus">CJE0813</name>
</gene>
<organism>
    <name type="scientific">Campylobacter jejuni (strain RM1221)</name>
    <dbReference type="NCBI Taxonomy" id="195099"/>
    <lineage>
        <taxon>Bacteria</taxon>
        <taxon>Pseudomonadati</taxon>
        <taxon>Campylobacterota</taxon>
        <taxon>Epsilonproteobacteria</taxon>
        <taxon>Campylobacterales</taxon>
        <taxon>Campylobacteraceae</taxon>
        <taxon>Campylobacter</taxon>
    </lineage>
</organism>
<reference key="1">
    <citation type="journal article" date="2005" name="PLoS Biol.">
        <title>Major structural differences and novel potential virulence mechanisms from the genomes of multiple Campylobacter species.</title>
        <authorList>
            <person name="Fouts D.E."/>
            <person name="Mongodin E.F."/>
            <person name="Mandrell R.E."/>
            <person name="Miller W.G."/>
            <person name="Rasko D.A."/>
            <person name="Ravel J."/>
            <person name="Brinkac L.M."/>
            <person name="DeBoy R.T."/>
            <person name="Parker C.T."/>
            <person name="Daugherty S.C."/>
            <person name="Dodson R.J."/>
            <person name="Durkin A.S."/>
            <person name="Madupu R."/>
            <person name="Sullivan S.A."/>
            <person name="Shetty J.U."/>
            <person name="Ayodeji M.A."/>
            <person name="Shvartsbeyn A."/>
            <person name="Schatz M.C."/>
            <person name="Badger J.H."/>
            <person name="Fraser C.M."/>
            <person name="Nelson K.E."/>
        </authorList>
    </citation>
    <scope>NUCLEOTIDE SEQUENCE [LARGE SCALE GENOMIC DNA]</scope>
    <source>
        <strain>RM1221</strain>
    </source>
</reference>